<dbReference type="PIR" id="A02069">
    <property type="entry name" value="A1MS47"/>
</dbReference>
<dbReference type="FunCoup" id="P01786">
    <property type="interactions" value="557"/>
</dbReference>
<dbReference type="CPTAC" id="non-CPTAC-3826"/>
<dbReference type="jPOST" id="P01786"/>
<dbReference type="PeptideAtlas" id="P01786"/>
<dbReference type="InParanoid" id="P01786"/>
<dbReference type="Proteomes" id="UP000000589">
    <property type="component" value="Unplaced"/>
</dbReference>
<dbReference type="RNAct" id="P01786">
    <property type="molecule type" value="protein"/>
</dbReference>
<dbReference type="GO" id="GO:0005576">
    <property type="term" value="C:extracellular region"/>
    <property type="evidence" value="ECO:0007669"/>
    <property type="project" value="UniProtKB-ARBA"/>
</dbReference>
<dbReference type="GO" id="GO:0019814">
    <property type="term" value="C:immunoglobulin complex"/>
    <property type="evidence" value="ECO:0007669"/>
    <property type="project" value="UniProtKB-KW"/>
</dbReference>
<dbReference type="GO" id="GO:0003823">
    <property type="term" value="F:antigen binding"/>
    <property type="evidence" value="ECO:0000318"/>
    <property type="project" value="GO_Central"/>
</dbReference>
<dbReference type="GO" id="GO:0016064">
    <property type="term" value="P:immunoglobulin mediated immune response"/>
    <property type="evidence" value="ECO:0000318"/>
    <property type="project" value="GO_Central"/>
</dbReference>
<dbReference type="FunFam" id="2.60.40.10:FF:001372">
    <property type="entry name" value="Ig heavy chain V region M603"/>
    <property type="match status" value="1"/>
</dbReference>
<dbReference type="Gene3D" id="2.60.40.10">
    <property type="entry name" value="Immunoglobulins"/>
    <property type="match status" value="1"/>
</dbReference>
<dbReference type="InterPro" id="IPR007110">
    <property type="entry name" value="Ig-like_dom"/>
</dbReference>
<dbReference type="InterPro" id="IPR036179">
    <property type="entry name" value="Ig-like_dom_sf"/>
</dbReference>
<dbReference type="InterPro" id="IPR013783">
    <property type="entry name" value="Ig-like_fold"/>
</dbReference>
<dbReference type="InterPro" id="IPR003599">
    <property type="entry name" value="Ig_sub"/>
</dbReference>
<dbReference type="InterPro" id="IPR013106">
    <property type="entry name" value="Ig_V-set"/>
</dbReference>
<dbReference type="InterPro" id="IPR050199">
    <property type="entry name" value="IgHV"/>
</dbReference>
<dbReference type="PANTHER" id="PTHR23266">
    <property type="entry name" value="IMMUNOGLOBULIN HEAVY CHAIN"/>
    <property type="match status" value="1"/>
</dbReference>
<dbReference type="Pfam" id="PF07686">
    <property type="entry name" value="V-set"/>
    <property type="match status" value="1"/>
</dbReference>
<dbReference type="SMART" id="SM00409">
    <property type="entry name" value="IG"/>
    <property type="match status" value="1"/>
</dbReference>
<dbReference type="SMART" id="SM00406">
    <property type="entry name" value="IGv"/>
    <property type="match status" value="1"/>
</dbReference>
<dbReference type="SUPFAM" id="SSF48726">
    <property type="entry name" value="Immunoglobulin"/>
    <property type="match status" value="1"/>
</dbReference>
<dbReference type="PROSITE" id="PS50835">
    <property type="entry name" value="IG_LIKE"/>
    <property type="match status" value="1"/>
</dbReference>
<proteinExistence type="evidence at protein level"/>
<comment type="miscellaneous">
    <text>This alpha chain was isolated from a myeloma protein that contains one light and one heavy chain per molecule, linked by a disulfide bond. In contrast, normal mouse IgA molecules contain two light and two heavy chains and lack a light-heavy chain disulfide bond.</text>
</comment>
<organism>
    <name type="scientific">Mus musculus</name>
    <name type="common">Mouse</name>
    <dbReference type="NCBI Taxonomy" id="10090"/>
    <lineage>
        <taxon>Eukaryota</taxon>
        <taxon>Metazoa</taxon>
        <taxon>Chordata</taxon>
        <taxon>Craniata</taxon>
        <taxon>Vertebrata</taxon>
        <taxon>Euteleostomi</taxon>
        <taxon>Mammalia</taxon>
        <taxon>Eutheria</taxon>
        <taxon>Euarchontoglires</taxon>
        <taxon>Glires</taxon>
        <taxon>Rodentia</taxon>
        <taxon>Myomorpha</taxon>
        <taxon>Muroidea</taxon>
        <taxon>Muridae</taxon>
        <taxon>Murinae</taxon>
        <taxon>Mus</taxon>
        <taxon>Mus</taxon>
    </lineage>
</organism>
<protein>
    <recommendedName>
        <fullName>Ig heavy chain V region MOPC 47A</fullName>
    </recommendedName>
</protein>
<name>HVM17_MOUSE</name>
<sequence>EVKLVESGGGLVQPGGSLRLSCATSGFTFTDYYMSWVRQPPGKALEWLGFIRNKABGYTTEYSAVKGRFTISRBBSZGILYLQMNTLRAQDSATYYCARDITEFAYWGZGTLVTVSS</sequence>
<reference key="1">
    <citation type="journal article" date="1979" name="J. Biol. Chem.">
        <title>Amino acid sequence of a mouse myeloma immunoglobin heavy chain (MOPC 47 A) with a 100-residue deletion.</title>
        <authorList>
            <person name="Robinson E.A."/>
            <person name="Appella E."/>
        </authorList>
    </citation>
    <scope>PROTEIN SEQUENCE</scope>
</reference>
<feature type="chain" id="PRO_0000059872" description="Ig heavy chain V region MOPC 47A">
    <location>
        <begin position="1"/>
        <end position="117" status="greater than"/>
    </location>
</feature>
<feature type="domain" description="Ig-like">
    <location>
        <begin position="1"/>
        <end position="113"/>
    </location>
</feature>
<feature type="non-terminal residue">
    <location>
        <position position="117"/>
    </location>
</feature>
<accession>P01786</accession>
<keyword id="KW-1064">Adaptive immunity</keyword>
<keyword id="KW-0903">Direct protein sequencing</keyword>
<keyword id="KW-0391">Immunity</keyword>
<keyword id="KW-1280">Immunoglobulin</keyword>
<keyword id="KW-1185">Reference proteome</keyword>